<organism>
    <name type="scientific">Pseudomonas putida</name>
    <name type="common">Arthrobacter siderocapsulatus</name>
    <dbReference type="NCBI Taxonomy" id="303"/>
    <lineage>
        <taxon>Bacteria</taxon>
        <taxon>Pseudomonadati</taxon>
        <taxon>Pseudomonadota</taxon>
        <taxon>Gammaproteobacteria</taxon>
        <taxon>Pseudomonadales</taxon>
        <taxon>Pseudomonadaceae</taxon>
        <taxon>Pseudomonas</taxon>
    </lineage>
</organism>
<protein>
    <recommendedName>
        <fullName>NAD(P)-dependent benzaldehyde dehydrogenase</fullName>
        <ecNumber>1.2.1.28</ecNumber>
        <ecNumber>1.2.1.7</ecNumber>
    </recommendedName>
</protein>
<feature type="chain" id="PRO_0000429131" description="NAD(P)-dependent benzaldehyde dehydrogenase">
    <location>
        <begin position="1"/>
        <end position="436"/>
    </location>
</feature>
<feature type="active site" evidence="2">
    <location>
        <position position="215"/>
    </location>
</feature>
<feature type="active site" evidence="2">
    <location>
        <position position="249"/>
    </location>
</feature>
<feature type="binding site" evidence="1">
    <location>
        <begin position="117"/>
        <end position="119"/>
    </location>
    <ligand>
        <name>NADP(+)</name>
        <dbReference type="ChEBI" id="CHEBI:58349"/>
    </ligand>
</feature>
<feature type="binding site" evidence="1">
    <location>
        <begin position="143"/>
        <end position="147"/>
    </location>
    <ligand>
        <name>NADP(+)</name>
        <dbReference type="ChEBI" id="CHEBI:58349"/>
    </ligand>
</feature>
<feature type="binding site" evidence="1">
    <location>
        <begin position="175"/>
        <end position="178"/>
    </location>
    <ligand>
        <name>NADP(+)</name>
        <dbReference type="ChEBI" id="CHEBI:58349"/>
    </ligand>
</feature>
<feature type="binding site" evidence="1">
    <location>
        <begin position="193"/>
        <end position="194"/>
    </location>
    <ligand>
        <name>NADP(+)</name>
        <dbReference type="ChEBI" id="CHEBI:58349"/>
    </ligand>
</feature>
<feature type="binding site" evidence="1">
    <location>
        <begin position="215"/>
        <end position="216"/>
    </location>
    <ligand>
        <name>NADP(+)</name>
        <dbReference type="ChEBI" id="CHEBI:58349"/>
    </ligand>
</feature>
<feature type="binding site" evidence="1">
    <location>
        <position position="249"/>
    </location>
    <ligand>
        <name>NADP(+)</name>
        <dbReference type="ChEBI" id="CHEBI:58349"/>
    </ligand>
</feature>
<feature type="binding site" evidence="1">
    <location>
        <begin position="337"/>
        <end position="339"/>
    </location>
    <ligand>
        <name>NADP(+)</name>
        <dbReference type="ChEBI" id="CHEBI:58349"/>
    </ligand>
</feature>
<feature type="helix" evidence="5">
    <location>
        <begin position="6"/>
        <end position="21"/>
    </location>
</feature>
<feature type="turn" evidence="5">
    <location>
        <begin position="22"/>
        <end position="25"/>
    </location>
</feature>
<feature type="helix" evidence="5">
    <location>
        <begin position="28"/>
        <end position="43"/>
    </location>
</feature>
<feature type="helix" evidence="5">
    <location>
        <begin position="46"/>
        <end position="57"/>
    </location>
</feature>
<feature type="helix" evidence="5">
    <location>
        <begin position="61"/>
        <end position="67"/>
    </location>
</feature>
<feature type="helix" evidence="5">
    <location>
        <begin position="69"/>
        <end position="86"/>
    </location>
</feature>
<feature type="strand" evidence="5">
    <location>
        <begin position="90"/>
        <end position="92"/>
    </location>
</feature>
<feature type="helix" evidence="5">
    <location>
        <begin position="96"/>
        <end position="98"/>
    </location>
</feature>
<feature type="strand" evidence="5">
    <location>
        <begin position="102"/>
        <end position="109"/>
    </location>
</feature>
<feature type="strand" evidence="5">
    <location>
        <begin position="111"/>
        <end position="116"/>
    </location>
</feature>
<feature type="strand" evidence="5">
    <location>
        <begin position="119"/>
        <end position="121"/>
    </location>
</feature>
<feature type="helix" evidence="5">
    <location>
        <begin position="124"/>
        <end position="136"/>
    </location>
</feature>
<feature type="strand" evidence="5">
    <location>
        <begin position="139"/>
        <end position="143"/>
    </location>
</feature>
<feature type="helix" evidence="5">
    <location>
        <begin position="149"/>
        <end position="162"/>
    </location>
</feature>
<feature type="turn" evidence="5">
    <location>
        <begin position="165"/>
        <end position="167"/>
    </location>
</feature>
<feature type="strand" evidence="5">
    <location>
        <begin position="168"/>
        <end position="170"/>
    </location>
</feature>
<feature type="helix" evidence="5">
    <location>
        <begin position="175"/>
        <end position="181"/>
    </location>
</feature>
<feature type="strand" evidence="5">
    <location>
        <begin position="187"/>
        <end position="193"/>
    </location>
</feature>
<feature type="helix" evidence="5">
    <location>
        <begin position="195"/>
        <end position="206"/>
    </location>
</feature>
<feature type="turn" evidence="5">
    <location>
        <begin position="207"/>
        <end position="209"/>
    </location>
</feature>
<feature type="strand" evidence="5">
    <location>
        <begin position="212"/>
        <end position="215"/>
    </location>
</feature>
<feature type="strand" evidence="5">
    <location>
        <begin position="220"/>
        <end position="224"/>
    </location>
</feature>
<feature type="helix" evidence="5">
    <location>
        <begin position="230"/>
        <end position="242"/>
    </location>
</feature>
<feature type="helix" evidence="5">
    <location>
        <begin position="243"/>
        <end position="246"/>
    </location>
</feature>
<feature type="strand" evidence="5">
    <location>
        <begin position="251"/>
        <end position="258"/>
    </location>
</feature>
<feature type="helix" evidence="5">
    <location>
        <begin position="259"/>
        <end position="276"/>
    </location>
</feature>
<feature type="helix" evidence="5">
    <location>
        <begin position="289"/>
        <end position="301"/>
    </location>
</feature>
<feature type="strand" evidence="5">
    <location>
        <begin position="303"/>
        <end position="308"/>
    </location>
</feature>
<feature type="helix" evidence="5">
    <location>
        <begin position="314"/>
        <end position="316"/>
    </location>
</feature>
<feature type="strand" evidence="5">
    <location>
        <begin position="322"/>
        <end position="326"/>
    </location>
</feature>
<feature type="strand" evidence="5">
    <location>
        <begin position="334"/>
        <end position="336"/>
    </location>
</feature>
<feature type="strand" evidence="5">
    <location>
        <begin position="340"/>
        <end position="349"/>
    </location>
</feature>
<feature type="helix" evidence="5">
    <location>
        <begin position="351"/>
        <end position="361"/>
    </location>
</feature>
<feature type="strand" evidence="5">
    <location>
        <begin position="366"/>
        <end position="371"/>
    </location>
</feature>
<feature type="helix" evidence="5">
    <location>
        <begin position="375"/>
        <end position="382"/>
    </location>
</feature>
<feature type="strand" evidence="5">
    <location>
        <begin position="388"/>
        <end position="393"/>
    </location>
</feature>
<feature type="helix" evidence="5">
    <location>
        <begin position="397"/>
        <end position="400"/>
    </location>
</feature>
<feature type="helix" evidence="5">
    <location>
        <begin position="410"/>
        <end position="412"/>
    </location>
</feature>
<feature type="helix" evidence="5">
    <location>
        <begin position="420"/>
        <end position="425"/>
    </location>
</feature>
<feature type="strand" evidence="5">
    <location>
        <begin position="426"/>
        <end position="434"/>
    </location>
</feature>
<accession>Q84DC3</accession>
<sequence length="436" mass="47435">MNYLSPAKIDSLFSAQKAYFATRATADVGFRKQSLERLKEAVINNKEALYSALAEDLGKPKDVVDLAEIGAVLHEIDFALAHLDEWVAPVSVPSPDIIAPSECYVVQEPYGVTYIIGPFNYPVNLTLTPLIGAIIGGNTCIIKPSETTPETSAVIEKIIAEAFAPEYVAVIQGGRDENSHLLSLPFDFIFFTGSPNVGKVVMQAAAKHLTPVVLELGGKCPLIVLPDADLDQTVNQLMFGKFINSGQTCIAPDYLYVHYSVKDALLERLVERVKTELPEINSTGKLVTERQVQRLVSLLEATQGQVLVGSQADVSKRALSATVVDGVEWNDPLMSEELFGPILPVLEFDSVRTAIDQVNKHHPKPLAVYVFGKDMDVAKGIINQIQSGDAQVNGVMLHAFSPYLPFGGIGASGMGEYHGHFSYLTFTHKKSVRIVP</sequence>
<reference key="1">
    <citation type="journal article" date="1990" name="Biochemistry">
        <title>Mandelate pathway of Pseudomonas putida: sequence relationships involving mandelate racemase, (S)-mandelate dehydrogenase, and benzoylformate decarboxylase and expression of benzoylformate decarboxylase in Escherichia coli.</title>
        <authorList>
            <person name="Tsou A.Y."/>
            <person name="Ransom S.C."/>
            <person name="Gerlt J.A."/>
            <person name="Buechter D.D."/>
            <person name="Babbitt P.C."/>
            <person name="Kenyon G.L."/>
        </authorList>
    </citation>
    <scope>NUCLEOTIDE SEQUENCE [GENOMIC DNA]</scope>
    <source>
        <strain>ATCC 12633 / DSM 291 / JCM 13063 / CCUG 12690 / LMG 2257 / NBRC 14164 / NCIMB 9494 / NCTC 10936 / VKM B-2187 / Stanier 90</strain>
    </source>
</reference>
<reference key="2">
    <citation type="journal article" date="2003" name="J. Bacteriol.">
        <title>Identification and characterization of a mandelamide hydrolase and an NAD(P)+-dependent benzaldehyde dehydrogenase from Pseudomonas putida ATCC 12633.</title>
        <authorList>
            <person name="McLeish M.J."/>
            <person name="Kneen M.M."/>
            <person name="Gopalakrishna K.N."/>
            <person name="Koo C.W."/>
            <person name="Babbitt P.C."/>
            <person name="Gerlt J.A."/>
            <person name="Kenyon G.L."/>
        </authorList>
    </citation>
    <scope>PROTEIN SEQUENCE OF 1-15</scope>
    <scope>FUNCTION</scope>
    <scope>BIOPHYSICOCHEMICAL PROPERTIES</scope>
    <source>
        <strain>ATCC 12633 / DSM 291 / JCM 13063 / CCUG 12690 / LMG 2257 / NBRC 14164 / NCIMB 9494 / NCTC 10936 / VKM B-2187 / Stanier 90</strain>
    </source>
</reference>
<keyword id="KW-0002">3D-structure</keyword>
<keyword id="KW-0903">Direct protein sequencing</keyword>
<keyword id="KW-0520">NAD</keyword>
<keyword id="KW-0521">NADP</keyword>
<keyword id="KW-0547">Nucleotide-binding</keyword>
<keyword id="KW-0560">Oxidoreductase</keyword>
<gene>
    <name type="primary">mdlD</name>
</gene>
<name>MDLD_PSEPU</name>
<proteinExistence type="evidence at protein level"/>
<dbReference type="EC" id="1.2.1.28"/>
<dbReference type="EC" id="1.2.1.7"/>
<dbReference type="EMBL" id="AY143338">
    <property type="protein sequence ID" value="AAO23020.1"/>
    <property type="molecule type" value="Genomic_DNA"/>
</dbReference>
<dbReference type="RefSeq" id="WP_016501743.1">
    <property type="nucleotide sequence ID" value="NZ_UGUX01000003.1"/>
</dbReference>
<dbReference type="PDB" id="5UCD">
    <property type="method" value="X-ray"/>
    <property type="resolution" value="2.28 A"/>
    <property type="chains" value="A/B=1-436"/>
</dbReference>
<dbReference type="PDBsum" id="5UCD"/>
<dbReference type="SMR" id="Q84DC3"/>
<dbReference type="GeneID" id="45526283"/>
<dbReference type="BioCyc" id="MetaCyc:MONOMER-2425"/>
<dbReference type="UniPathway" id="UPA00873">
    <property type="reaction ID" value="UER00855"/>
</dbReference>
<dbReference type="GO" id="GO:0005737">
    <property type="term" value="C:cytoplasm"/>
    <property type="evidence" value="ECO:0007669"/>
    <property type="project" value="TreeGrafter"/>
</dbReference>
<dbReference type="GO" id="GO:0018479">
    <property type="term" value="F:benzaldehyde dehydrogenase (NAD+) activity"/>
    <property type="evidence" value="ECO:0000304"/>
    <property type="project" value="UniProtKB"/>
</dbReference>
<dbReference type="GO" id="GO:0018477">
    <property type="term" value="F:benzaldehyde dehydrogenase (NADP+) activity"/>
    <property type="evidence" value="ECO:0000304"/>
    <property type="project" value="UniProtKB"/>
</dbReference>
<dbReference type="GO" id="GO:0000166">
    <property type="term" value="F:nucleotide binding"/>
    <property type="evidence" value="ECO:0007669"/>
    <property type="project" value="UniProtKB-KW"/>
</dbReference>
<dbReference type="GO" id="GO:0006081">
    <property type="term" value="P:aldehyde metabolic process"/>
    <property type="evidence" value="ECO:0007669"/>
    <property type="project" value="InterPro"/>
</dbReference>
<dbReference type="GO" id="GO:0019596">
    <property type="term" value="P:mandelate catabolic process"/>
    <property type="evidence" value="ECO:0000304"/>
    <property type="project" value="UniProtKB"/>
</dbReference>
<dbReference type="CDD" id="cd07087">
    <property type="entry name" value="ALDH_F3-13-14_CALDH-like"/>
    <property type="match status" value="1"/>
</dbReference>
<dbReference type="FunFam" id="3.40.605.10:FF:000004">
    <property type="entry name" value="Aldehyde dehydrogenase"/>
    <property type="match status" value="1"/>
</dbReference>
<dbReference type="Gene3D" id="3.40.605.10">
    <property type="entry name" value="Aldehyde Dehydrogenase, Chain A, domain 1"/>
    <property type="match status" value="1"/>
</dbReference>
<dbReference type="Gene3D" id="3.40.309.10">
    <property type="entry name" value="Aldehyde Dehydrogenase, Chain A, domain 2"/>
    <property type="match status" value="1"/>
</dbReference>
<dbReference type="InterPro" id="IPR016161">
    <property type="entry name" value="Ald_DH/histidinol_DH"/>
</dbReference>
<dbReference type="InterPro" id="IPR016163">
    <property type="entry name" value="Ald_DH_C"/>
</dbReference>
<dbReference type="InterPro" id="IPR016160">
    <property type="entry name" value="Ald_DH_CS_CYS"/>
</dbReference>
<dbReference type="InterPro" id="IPR016162">
    <property type="entry name" value="Ald_DH_N"/>
</dbReference>
<dbReference type="InterPro" id="IPR015590">
    <property type="entry name" value="Aldehyde_DH_dom"/>
</dbReference>
<dbReference type="InterPro" id="IPR012394">
    <property type="entry name" value="Aldehyde_DH_NAD(P)"/>
</dbReference>
<dbReference type="InterPro" id="IPR054920">
    <property type="entry name" value="BenzalDHMdlD"/>
</dbReference>
<dbReference type="NCBIfam" id="NF045701">
    <property type="entry name" value="BenzalDHMdlD"/>
    <property type="match status" value="1"/>
</dbReference>
<dbReference type="PANTHER" id="PTHR43570">
    <property type="entry name" value="ALDEHYDE DEHYDROGENASE"/>
    <property type="match status" value="1"/>
</dbReference>
<dbReference type="PANTHER" id="PTHR43570:SF16">
    <property type="entry name" value="ALDEHYDE DEHYDROGENASE TYPE III, ISOFORM Q"/>
    <property type="match status" value="1"/>
</dbReference>
<dbReference type="Pfam" id="PF00171">
    <property type="entry name" value="Aldedh"/>
    <property type="match status" value="1"/>
</dbReference>
<dbReference type="PIRSF" id="PIRSF036492">
    <property type="entry name" value="ALDH"/>
    <property type="match status" value="1"/>
</dbReference>
<dbReference type="SUPFAM" id="SSF53720">
    <property type="entry name" value="ALDH-like"/>
    <property type="match status" value="1"/>
</dbReference>
<dbReference type="PROSITE" id="PS00070">
    <property type="entry name" value="ALDEHYDE_DEHYDR_CYS"/>
    <property type="match status" value="1"/>
</dbReference>
<evidence type="ECO:0000250" key="1"/>
<evidence type="ECO:0000255" key="2">
    <source>
        <dbReference type="PROSITE-ProRule" id="PRU10008"/>
    </source>
</evidence>
<evidence type="ECO:0000269" key="3">
    <source>
    </source>
</evidence>
<evidence type="ECO:0000305" key="4"/>
<evidence type="ECO:0007829" key="5">
    <source>
        <dbReference type="PDB" id="5UCD"/>
    </source>
</evidence>
<comment type="function">
    <text evidence="3">NAD or NADP-dependent benzaldehyde dehydrogenase that catalyzes the conversion of benzaldehyde into benzoate in the (R)-mandelate degradation pathway.</text>
</comment>
<comment type="catalytic activity">
    <reaction>
        <text>benzaldehyde + NAD(+) + H2O = benzoate + NADH + 2 H(+)</text>
        <dbReference type="Rhea" id="RHEA:11840"/>
        <dbReference type="ChEBI" id="CHEBI:15377"/>
        <dbReference type="ChEBI" id="CHEBI:15378"/>
        <dbReference type="ChEBI" id="CHEBI:16150"/>
        <dbReference type="ChEBI" id="CHEBI:17169"/>
        <dbReference type="ChEBI" id="CHEBI:57540"/>
        <dbReference type="ChEBI" id="CHEBI:57945"/>
        <dbReference type="EC" id="1.2.1.28"/>
    </reaction>
</comment>
<comment type="catalytic activity">
    <reaction>
        <text>benzaldehyde + NADP(+) + H2O = benzoate + NADPH + 2 H(+)</text>
        <dbReference type="Rhea" id="RHEA:21660"/>
        <dbReference type="ChEBI" id="CHEBI:15377"/>
        <dbReference type="ChEBI" id="CHEBI:15378"/>
        <dbReference type="ChEBI" id="CHEBI:16150"/>
        <dbReference type="ChEBI" id="CHEBI:17169"/>
        <dbReference type="ChEBI" id="CHEBI:57783"/>
        <dbReference type="ChEBI" id="CHEBI:58349"/>
        <dbReference type="EC" id="1.2.1.7"/>
    </reaction>
</comment>
<comment type="biophysicochemical properties">
    <kinetics>
        <KM evidence="3">63.4 uM for benzaldehyde (with NAD)</KM>
        <KM evidence="3">39.9 uM for benzaldehyde (with NADP)</KM>
        <text>kcat is 8240 min(-1) with benzaldehyde and NAD as substrate. kcat is 2550 min(-1) with benzaldehyde and NADP as substrate.</text>
    </kinetics>
</comment>
<comment type="pathway">
    <text>Aromatic compound metabolism; (R)-mandelate degradation; benzoate from (R)-mandelate: step 4/4.</text>
</comment>
<comment type="similarity">
    <text evidence="4">Belongs to the aldehyde dehydrogenase family.</text>
</comment>